<comment type="cofactor">
    <cofactor evidence="1">
        <name>Zn(2+)</name>
        <dbReference type="ChEBI" id="CHEBI:29105"/>
    </cofactor>
    <text evidence="1">Binds 1 zinc ion per subunit.</text>
</comment>
<comment type="subunit">
    <text evidence="1">Part of the 30S ribosomal subunit.</text>
</comment>
<comment type="similarity">
    <text evidence="1">Belongs to the eukaryotic ribosomal protein eS27 family.</text>
</comment>
<evidence type="ECO:0000255" key="1">
    <source>
        <dbReference type="HAMAP-Rule" id="MF_00371"/>
    </source>
</evidence>
<evidence type="ECO:0000305" key="2"/>
<keyword id="KW-0479">Metal-binding</keyword>
<keyword id="KW-1185">Reference proteome</keyword>
<keyword id="KW-0687">Ribonucleoprotein</keyword>
<keyword id="KW-0689">Ribosomal protein</keyword>
<keyword id="KW-0862">Zinc</keyword>
<keyword id="KW-0863">Zinc-finger</keyword>
<organism>
    <name type="scientific">Methanoregula boonei (strain DSM 21154 / JCM 14090 / 6A8)</name>
    <dbReference type="NCBI Taxonomy" id="456442"/>
    <lineage>
        <taxon>Archaea</taxon>
        <taxon>Methanobacteriati</taxon>
        <taxon>Methanobacteriota</taxon>
        <taxon>Stenosarchaea group</taxon>
        <taxon>Methanomicrobia</taxon>
        <taxon>Methanomicrobiales</taxon>
        <taxon>Methanoregulaceae</taxon>
        <taxon>Methanoregula</taxon>
    </lineage>
</organism>
<gene>
    <name evidence="1" type="primary">rps27e</name>
    <name type="ordered locus">Mboo_1952</name>
</gene>
<proteinExistence type="inferred from homology"/>
<protein>
    <recommendedName>
        <fullName evidence="1">Small ribosomal subunit protein eS27</fullName>
    </recommendedName>
    <alternativeName>
        <fullName evidence="2">30S ribosomal protein S27e</fullName>
    </alternativeName>
</protein>
<dbReference type="EMBL" id="CP000780">
    <property type="protein sequence ID" value="ABS56467.1"/>
    <property type="molecule type" value="Genomic_DNA"/>
</dbReference>
<dbReference type="RefSeq" id="WP_012107522.1">
    <property type="nucleotide sequence ID" value="NC_009712.1"/>
</dbReference>
<dbReference type="SMR" id="A7I9Q6"/>
<dbReference type="STRING" id="456442.Mboo_1952"/>
<dbReference type="GeneID" id="5412107"/>
<dbReference type="KEGG" id="mbn:Mboo_1952"/>
<dbReference type="eggNOG" id="arCOG04108">
    <property type="taxonomic scope" value="Archaea"/>
</dbReference>
<dbReference type="HOGENOM" id="CLU_199465_0_0_2"/>
<dbReference type="OrthoDB" id="5718at2157"/>
<dbReference type="Proteomes" id="UP000002408">
    <property type="component" value="Chromosome"/>
</dbReference>
<dbReference type="GO" id="GO:1990904">
    <property type="term" value="C:ribonucleoprotein complex"/>
    <property type="evidence" value="ECO:0007669"/>
    <property type="project" value="UniProtKB-KW"/>
</dbReference>
<dbReference type="GO" id="GO:0005840">
    <property type="term" value="C:ribosome"/>
    <property type="evidence" value="ECO:0007669"/>
    <property type="project" value="UniProtKB-KW"/>
</dbReference>
<dbReference type="GO" id="GO:0003735">
    <property type="term" value="F:structural constituent of ribosome"/>
    <property type="evidence" value="ECO:0007669"/>
    <property type="project" value="InterPro"/>
</dbReference>
<dbReference type="GO" id="GO:0008270">
    <property type="term" value="F:zinc ion binding"/>
    <property type="evidence" value="ECO:0007669"/>
    <property type="project" value="UniProtKB-UniRule"/>
</dbReference>
<dbReference type="GO" id="GO:0006412">
    <property type="term" value="P:translation"/>
    <property type="evidence" value="ECO:0007669"/>
    <property type="project" value="UniProtKB-UniRule"/>
</dbReference>
<dbReference type="Gene3D" id="2.20.25.100">
    <property type="entry name" value="Zn-binding ribosomal proteins"/>
    <property type="match status" value="1"/>
</dbReference>
<dbReference type="HAMAP" id="MF_00371">
    <property type="entry name" value="Ribosomal_eS27"/>
    <property type="match status" value="1"/>
</dbReference>
<dbReference type="InterPro" id="IPR000592">
    <property type="entry name" value="Ribosomal_eS27"/>
</dbReference>
<dbReference type="InterPro" id="IPR023407">
    <property type="entry name" value="Ribosomal_eS27_Zn-bd_dom_sf"/>
</dbReference>
<dbReference type="InterPro" id="IPR011332">
    <property type="entry name" value="Ribosomal_zn-bd"/>
</dbReference>
<dbReference type="NCBIfam" id="NF001629">
    <property type="entry name" value="PRK00415.1"/>
    <property type="match status" value="1"/>
</dbReference>
<dbReference type="PANTHER" id="PTHR11594">
    <property type="entry name" value="40S RIBOSOMAL PROTEIN S27"/>
    <property type="match status" value="1"/>
</dbReference>
<dbReference type="Pfam" id="PF01667">
    <property type="entry name" value="Ribosomal_S27e"/>
    <property type="match status" value="1"/>
</dbReference>
<dbReference type="SUPFAM" id="SSF57829">
    <property type="entry name" value="Zn-binding ribosomal proteins"/>
    <property type="match status" value="1"/>
</dbReference>
<dbReference type="PROSITE" id="PS01168">
    <property type="entry name" value="RIBOSOMAL_S27E"/>
    <property type="match status" value="1"/>
</dbReference>
<name>RS27_METB6</name>
<accession>A7I9Q6</accession>
<sequence>MVREARANRSSFLKVKCPDCDNEQTVFSKASTTVKCVVCGRDLATPTGGKANLKAEIISEFK</sequence>
<feature type="chain" id="PRO_1000072123" description="Small ribosomal subunit protein eS27">
    <location>
        <begin position="1"/>
        <end position="62"/>
    </location>
</feature>
<feature type="zinc finger region" description="C4-type" evidence="1">
    <location>
        <begin position="17"/>
        <end position="39"/>
    </location>
</feature>
<feature type="binding site" evidence="1">
    <location>
        <position position="17"/>
    </location>
    <ligand>
        <name>Zn(2+)</name>
        <dbReference type="ChEBI" id="CHEBI:29105"/>
    </ligand>
</feature>
<feature type="binding site" evidence="1">
    <location>
        <position position="20"/>
    </location>
    <ligand>
        <name>Zn(2+)</name>
        <dbReference type="ChEBI" id="CHEBI:29105"/>
    </ligand>
</feature>
<feature type="binding site" evidence="1">
    <location>
        <position position="36"/>
    </location>
    <ligand>
        <name>Zn(2+)</name>
        <dbReference type="ChEBI" id="CHEBI:29105"/>
    </ligand>
</feature>
<feature type="binding site" evidence="1">
    <location>
        <position position="39"/>
    </location>
    <ligand>
        <name>Zn(2+)</name>
        <dbReference type="ChEBI" id="CHEBI:29105"/>
    </ligand>
</feature>
<reference key="1">
    <citation type="journal article" date="2015" name="Microbiology">
        <title>Genome of Methanoregula boonei 6A8 reveals adaptations to oligotrophic peatland environments.</title>
        <authorList>
            <person name="Braeuer S."/>
            <person name="Cadillo-Quiroz H."/>
            <person name="Kyrpides N."/>
            <person name="Woyke T."/>
            <person name="Goodwin L."/>
            <person name="Detter C."/>
            <person name="Podell S."/>
            <person name="Yavitt J.B."/>
            <person name="Zinder S.H."/>
        </authorList>
    </citation>
    <scope>NUCLEOTIDE SEQUENCE [LARGE SCALE GENOMIC DNA]</scope>
    <source>
        <strain>DSM 21154 / JCM 14090 / 6A8</strain>
    </source>
</reference>